<gene>
    <name evidence="1" type="primary">era</name>
    <name type="ordered locus">SSPA0270</name>
</gene>
<protein>
    <recommendedName>
        <fullName evidence="1">GTPase Era</fullName>
    </recommendedName>
</protein>
<comment type="function">
    <text evidence="1">An essential GTPase that binds both GDP and GTP, with rapid nucleotide exchange. Plays a role in 16S rRNA processing and 30S ribosomal subunit biogenesis and possibly also in cell cycle regulation and energy metabolism.</text>
</comment>
<comment type="subunit">
    <text evidence="1">Monomer.</text>
</comment>
<comment type="subcellular location">
    <subcellularLocation>
        <location>Cytoplasm</location>
    </subcellularLocation>
    <subcellularLocation>
        <location evidence="1">Cell inner membrane</location>
        <topology evidence="1">Peripheral membrane protein</topology>
    </subcellularLocation>
</comment>
<comment type="similarity">
    <text evidence="1 2">Belongs to the TRAFAC class TrmE-Era-EngA-EngB-Septin-like GTPase superfamily. Era GTPase family.</text>
</comment>
<evidence type="ECO:0000255" key="1">
    <source>
        <dbReference type="HAMAP-Rule" id="MF_00367"/>
    </source>
</evidence>
<evidence type="ECO:0000255" key="2">
    <source>
        <dbReference type="PROSITE-ProRule" id="PRU01050"/>
    </source>
</evidence>
<organism>
    <name type="scientific">Salmonella paratyphi A (strain AKU_12601)</name>
    <dbReference type="NCBI Taxonomy" id="554290"/>
    <lineage>
        <taxon>Bacteria</taxon>
        <taxon>Pseudomonadati</taxon>
        <taxon>Pseudomonadota</taxon>
        <taxon>Gammaproteobacteria</taxon>
        <taxon>Enterobacterales</taxon>
        <taxon>Enterobacteriaceae</taxon>
        <taxon>Salmonella</taxon>
    </lineage>
</organism>
<feature type="chain" id="PRO_1000121353" description="GTPase Era">
    <location>
        <begin position="1"/>
        <end position="301"/>
    </location>
</feature>
<feature type="domain" description="Era-type G" evidence="2">
    <location>
        <begin position="7"/>
        <end position="175"/>
    </location>
</feature>
<feature type="domain" description="KH type-2" evidence="1">
    <location>
        <begin position="206"/>
        <end position="283"/>
    </location>
</feature>
<feature type="region of interest" description="G1" evidence="2">
    <location>
        <begin position="15"/>
        <end position="22"/>
    </location>
</feature>
<feature type="region of interest" description="G2" evidence="2">
    <location>
        <begin position="41"/>
        <end position="45"/>
    </location>
</feature>
<feature type="region of interest" description="G3" evidence="2">
    <location>
        <begin position="62"/>
        <end position="65"/>
    </location>
</feature>
<feature type="region of interest" description="G4" evidence="2">
    <location>
        <begin position="124"/>
        <end position="127"/>
    </location>
</feature>
<feature type="region of interest" description="G5" evidence="2">
    <location>
        <begin position="154"/>
        <end position="156"/>
    </location>
</feature>
<feature type="binding site" evidence="1">
    <location>
        <begin position="15"/>
        <end position="22"/>
    </location>
    <ligand>
        <name>GTP</name>
        <dbReference type="ChEBI" id="CHEBI:37565"/>
    </ligand>
</feature>
<feature type="binding site" evidence="1">
    <location>
        <begin position="62"/>
        <end position="66"/>
    </location>
    <ligand>
        <name>GTP</name>
        <dbReference type="ChEBI" id="CHEBI:37565"/>
    </ligand>
</feature>
<feature type="binding site" evidence="1">
    <location>
        <begin position="124"/>
        <end position="127"/>
    </location>
    <ligand>
        <name>GTP</name>
        <dbReference type="ChEBI" id="CHEBI:37565"/>
    </ligand>
</feature>
<name>ERA_SALPK</name>
<dbReference type="EMBL" id="FM200053">
    <property type="protein sequence ID" value="CAR58385.1"/>
    <property type="molecule type" value="Genomic_DNA"/>
</dbReference>
<dbReference type="RefSeq" id="WP_000102230.1">
    <property type="nucleotide sequence ID" value="NC_011147.1"/>
</dbReference>
<dbReference type="SMR" id="B5BAT1"/>
<dbReference type="KEGG" id="sek:SSPA0270"/>
<dbReference type="HOGENOM" id="CLU_038009_1_2_6"/>
<dbReference type="Proteomes" id="UP000001869">
    <property type="component" value="Chromosome"/>
</dbReference>
<dbReference type="GO" id="GO:0005829">
    <property type="term" value="C:cytosol"/>
    <property type="evidence" value="ECO:0007669"/>
    <property type="project" value="TreeGrafter"/>
</dbReference>
<dbReference type="GO" id="GO:0005886">
    <property type="term" value="C:plasma membrane"/>
    <property type="evidence" value="ECO:0007669"/>
    <property type="project" value="UniProtKB-SubCell"/>
</dbReference>
<dbReference type="GO" id="GO:0005525">
    <property type="term" value="F:GTP binding"/>
    <property type="evidence" value="ECO:0007669"/>
    <property type="project" value="UniProtKB-UniRule"/>
</dbReference>
<dbReference type="GO" id="GO:0003924">
    <property type="term" value="F:GTPase activity"/>
    <property type="evidence" value="ECO:0007669"/>
    <property type="project" value="UniProtKB-UniRule"/>
</dbReference>
<dbReference type="GO" id="GO:0043024">
    <property type="term" value="F:ribosomal small subunit binding"/>
    <property type="evidence" value="ECO:0007669"/>
    <property type="project" value="TreeGrafter"/>
</dbReference>
<dbReference type="GO" id="GO:0070181">
    <property type="term" value="F:small ribosomal subunit rRNA binding"/>
    <property type="evidence" value="ECO:0007669"/>
    <property type="project" value="UniProtKB-UniRule"/>
</dbReference>
<dbReference type="GO" id="GO:0000028">
    <property type="term" value="P:ribosomal small subunit assembly"/>
    <property type="evidence" value="ECO:0007669"/>
    <property type="project" value="TreeGrafter"/>
</dbReference>
<dbReference type="CDD" id="cd04163">
    <property type="entry name" value="Era"/>
    <property type="match status" value="1"/>
</dbReference>
<dbReference type="CDD" id="cd22534">
    <property type="entry name" value="KH-II_Era"/>
    <property type="match status" value="1"/>
</dbReference>
<dbReference type="FunFam" id="3.30.300.20:FF:000003">
    <property type="entry name" value="GTPase Era"/>
    <property type="match status" value="1"/>
</dbReference>
<dbReference type="FunFam" id="3.40.50.300:FF:000094">
    <property type="entry name" value="GTPase Era"/>
    <property type="match status" value="1"/>
</dbReference>
<dbReference type="Gene3D" id="3.30.300.20">
    <property type="match status" value="1"/>
</dbReference>
<dbReference type="Gene3D" id="3.40.50.300">
    <property type="entry name" value="P-loop containing nucleotide triphosphate hydrolases"/>
    <property type="match status" value="1"/>
</dbReference>
<dbReference type="HAMAP" id="MF_00367">
    <property type="entry name" value="GTPase_Era"/>
    <property type="match status" value="1"/>
</dbReference>
<dbReference type="InterPro" id="IPR030388">
    <property type="entry name" value="G_ERA_dom"/>
</dbReference>
<dbReference type="InterPro" id="IPR006073">
    <property type="entry name" value="GTP-bd"/>
</dbReference>
<dbReference type="InterPro" id="IPR005662">
    <property type="entry name" value="GTPase_Era-like"/>
</dbReference>
<dbReference type="InterPro" id="IPR015946">
    <property type="entry name" value="KH_dom-like_a/b"/>
</dbReference>
<dbReference type="InterPro" id="IPR004044">
    <property type="entry name" value="KH_dom_type_2"/>
</dbReference>
<dbReference type="InterPro" id="IPR009019">
    <property type="entry name" value="KH_sf_prok-type"/>
</dbReference>
<dbReference type="InterPro" id="IPR027417">
    <property type="entry name" value="P-loop_NTPase"/>
</dbReference>
<dbReference type="InterPro" id="IPR005225">
    <property type="entry name" value="Small_GTP-bd"/>
</dbReference>
<dbReference type="NCBIfam" id="TIGR00436">
    <property type="entry name" value="era"/>
    <property type="match status" value="1"/>
</dbReference>
<dbReference type="NCBIfam" id="NF000908">
    <property type="entry name" value="PRK00089.1"/>
    <property type="match status" value="1"/>
</dbReference>
<dbReference type="NCBIfam" id="TIGR00231">
    <property type="entry name" value="small_GTP"/>
    <property type="match status" value="1"/>
</dbReference>
<dbReference type="PANTHER" id="PTHR42698">
    <property type="entry name" value="GTPASE ERA"/>
    <property type="match status" value="1"/>
</dbReference>
<dbReference type="PANTHER" id="PTHR42698:SF1">
    <property type="entry name" value="GTPASE ERA, MITOCHONDRIAL"/>
    <property type="match status" value="1"/>
</dbReference>
<dbReference type="Pfam" id="PF07650">
    <property type="entry name" value="KH_2"/>
    <property type="match status" value="1"/>
</dbReference>
<dbReference type="Pfam" id="PF01926">
    <property type="entry name" value="MMR_HSR1"/>
    <property type="match status" value="1"/>
</dbReference>
<dbReference type="SUPFAM" id="SSF52540">
    <property type="entry name" value="P-loop containing nucleoside triphosphate hydrolases"/>
    <property type="match status" value="1"/>
</dbReference>
<dbReference type="SUPFAM" id="SSF54814">
    <property type="entry name" value="Prokaryotic type KH domain (KH-domain type II)"/>
    <property type="match status" value="1"/>
</dbReference>
<dbReference type="PROSITE" id="PS51713">
    <property type="entry name" value="G_ERA"/>
    <property type="match status" value="1"/>
</dbReference>
<dbReference type="PROSITE" id="PS50823">
    <property type="entry name" value="KH_TYPE_2"/>
    <property type="match status" value="1"/>
</dbReference>
<proteinExistence type="inferred from homology"/>
<sequence length="301" mass="33854">MSTDKTYCGFIAIVGRPNVGKSTLLNKLLGQKISITSRKAQTTRHRIVGIHTEGPYQAIYVDTPGLHMEEKRAINRLMNKAASSSIGDVELVIFVVEGTRWTPDDEMVLNKLRDGKAPVILAVNKVDNVQEKADLLPHLQFLASQMNFLDIVPISAETGMNVDTIAGIVRKHLPEAIHHFPEDYITDRSQRFMASEIIREKLMRFLGAELPYSVTVEIERFVTNERGGYDINGLILVEREGQKKMVIGNKGAKIKTIGIEARKDMQEMFEAPVHLELWVKVKSGWADDERALRSLGYVDDL</sequence>
<keyword id="KW-0997">Cell inner membrane</keyword>
<keyword id="KW-1003">Cell membrane</keyword>
<keyword id="KW-0963">Cytoplasm</keyword>
<keyword id="KW-0342">GTP-binding</keyword>
<keyword id="KW-0472">Membrane</keyword>
<keyword id="KW-0547">Nucleotide-binding</keyword>
<keyword id="KW-0690">Ribosome biogenesis</keyword>
<keyword id="KW-0694">RNA-binding</keyword>
<keyword id="KW-0699">rRNA-binding</keyword>
<reference key="1">
    <citation type="journal article" date="2009" name="BMC Genomics">
        <title>Pseudogene accumulation in the evolutionary histories of Salmonella enterica serovars Paratyphi A and Typhi.</title>
        <authorList>
            <person name="Holt K.E."/>
            <person name="Thomson N.R."/>
            <person name="Wain J."/>
            <person name="Langridge G.C."/>
            <person name="Hasan R."/>
            <person name="Bhutta Z.A."/>
            <person name="Quail M.A."/>
            <person name="Norbertczak H."/>
            <person name="Walker D."/>
            <person name="Simmonds M."/>
            <person name="White B."/>
            <person name="Bason N."/>
            <person name="Mungall K."/>
            <person name="Dougan G."/>
            <person name="Parkhill J."/>
        </authorList>
    </citation>
    <scope>NUCLEOTIDE SEQUENCE [LARGE SCALE GENOMIC DNA]</scope>
    <source>
        <strain>AKU_12601</strain>
    </source>
</reference>
<accession>B5BAT1</accession>